<sequence>MNSDTNAFKDIRISCVELSRIAFLPTESFDPNSLTLLACLKKVEEKLSAYEDDSLSPKFADYVFVPIASLLKQPALGESQTEYVLLIIFHLLRTCWSSNGKFSEQLGQQLFPLITFLVSSDKDNQKLITRSDEFKYAGCLVLHQFFKSVRSQRYHKEFFSNSKPNLLPALGHSVTILLKILEQSPQNNELQFKALASLEVLFQDIISDGEMLSFILPGNVSVFAKILTKPGRQIHYKVCVRTLEVLAKLLVLVYDDFSLDIKVNKLTDIRELSDTKLKHEINQSFMFNGPIVLLRTDGKTHRDTSWLTATSGQINIALEAFIPKLLKRNNESIDEALATFVSILLTRCENSLNNCEKVLVSTLVHLERDPMSKLPSHLVKLKEVVNEDLHKLSDIIRFENADRLSSLSFAITILEKNNERDTMINEVVRCLFESLNESIEPPSLINHKERIIEQSSQLTTTVNFENLESTNALIALPRLSEDMSLKLKKFTYHMGSLLLERHILNDVVTELISEQVDSPRTQKIVALWLSTNFIKAMEKQPKEEEVYLQFESDANYSSSMVEEVCLIVLEFCNELSQDISMEIEGKGIKKSDEFAVCTVLFSIETICAVMREEFQPELIDYIYTVVDALASPSEAIRYVSQSCALRIADTLYHGSIPNMILSNVDYLVESISSRLNSGMTERVSQILMVICQLAGYETIENFKDVIETIFKLLDYYHGYSDLCLQFFQLFKIIILEMKKKYINDDEMILKIANQHISQSTFSPWGMTDFQQVLNILDKETQVKDDITDENDVDFLKDDNEPSNFQEYFDSKLREPDSDDDEEEREEEVEGSSKEYTDQWTSPIPSDSYKILLQILGYGERLLTHPSKRLRVQILIVMRLIFPLLSTQHNLLIREVASTWDSIIQCVLCSDYSIVQPACSCVEQMIKYSGDFVAKRFIELWQKLCQDSFILKELRIDPTVHNHEKKSISKHVKFPPVTENALVSMVHMVLEGVKITEYLISEAVLEQIIYCCIQVVPVEKISSMSLIVGDIVWKIRNIN</sequence>
<protein>
    <recommendedName>
        <fullName>TEL2-interacting protein 1</fullName>
    </recommendedName>
</protein>
<gene>
    <name type="primary">TTI1</name>
    <name type="synonym">FMP47</name>
    <name type="ordered locus">YKL033W</name>
    <name type="ORF">YKL246</name>
</gene>
<reference key="1">
    <citation type="journal article" date="1994" name="Yeast">
        <title>Analysis of an 11.7 kb DNA fragment of chromosome XI reveals a new tRNA gene and four new open reading frames including a leucine zipper protein and a homologue to the yeast mitochondrial regulator ABF2.</title>
        <authorList>
            <person name="Purnelle B."/>
            <person name="Skala J."/>
            <person name="van Dyck L."/>
            <person name="Goffeau A."/>
        </authorList>
    </citation>
    <scope>NUCLEOTIDE SEQUENCE [GENOMIC DNA]</scope>
    <source>
        <strain>ATCC 204508 / S288c</strain>
    </source>
</reference>
<reference key="2">
    <citation type="journal article" date="1994" name="Nature">
        <title>Complete DNA sequence of yeast chromosome XI.</title>
        <authorList>
            <person name="Dujon B."/>
            <person name="Alexandraki D."/>
            <person name="Andre B."/>
            <person name="Ansorge W."/>
            <person name="Baladron V."/>
            <person name="Ballesta J.P.G."/>
            <person name="Banrevi A."/>
            <person name="Bolle P.-A."/>
            <person name="Bolotin-Fukuhara M."/>
            <person name="Bossier P."/>
            <person name="Bou G."/>
            <person name="Boyer J."/>
            <person name="Buitrago M.J."/>
            <person name="Cheret G."/>
            <person name="Colleaux L."/>
            <person name="Daignan-Fornier B."/>
            <person name="del Rey F."/>
            <person name="Dion C."/>
            <person name="Domdey H."/>
            <person name="Duesterhoeft A."/>
            <person name="Duesterhus S."/>
            <person name="Entian K.-D."/>
            <person name="Erfle H."/>
            <person name="Esteban P.F."/>
            <person name="Feldmann H."/>
            <person name="Fernandes L."/>
            <person name="Fobo G.M."/>
            <person name="Fritz C."/>
            <person name="Fukuhara H."/>
            <person name="Gabel C."/>
            <person name="Gaillon L."/>
            <person name="Garcia-Cantalejo J.M."/>
            <person name="Garcia-Ramirez J.J."/>
            <person name="Gent M.E."/>
            <person name="Ghazvini M."/>
            <person name="Goffeau A."/>
            <person name="Gonzalez A."/>
            <person name="Grothues D."/>
            <person name="Guerreiro P."/>
            <person name="Hegemann J.H."/>
            <person name="Hewitt N."/>
            <person name="Hilger F."/>
            <person name="Hollenberg C.P."/>
            <person name="Horaitis O."/>
            <person name="Indge K.J."/>
            <person name="Jacquier A."/>
            <person name="James C.M."/>
            <person name="Jauniaux J.-C."/>
            <person name="Jimenez A."/>
            <person name="Keuchel H."/>
            <person name="Kirchrath L."/>
            <person name="Kleine K."/>
            <person name="Koetter P."/>
            <person name="Legrain P."/>
            <person name="Liebl S."/>
            <person name="Louis E.J."/>
            <person name="Maia e Silva A."/>
            <person name="Marck C."/>
            <person name="Monnier A.-L."/>
            <person name="Moestl D."/>
            <person name="Mueller S."/>
            <person name="Obermaier B."/>
            <person name="Oliver S.G."/>
            <person name="Pallier C."/>
            <person name="Pascolo S."/>
            <person name="Pfeiffer F."/>
            <person name="Philippsen P."/>
            <person name="Planta R.J."/>
            <person name="Pohl F.M."/>
            <person name="Pohl T.M."/>
            <person name="Poehlmann R."/>
            <person name="Portetelle D."/>
            <person name="Purnelle B."/>
            <person name="Puzos V."/>
            <person name="Ramezani Rad M."/>
            <person name="Rasmussen S.W."/>
            <person name="Remacha M.A."/>
            <person name="Revuelta J.L."/>
            <person name="Richard G.-F."/>
            <person name="Rieger M."/>
            <person name="Rodrigues-Pousada C."/>
            <person name="Rose M."/>
            <person name="Rupp T."/>
            <person name="Santos M.A."/>
            <person name="Schwager C."/>
            <person name="Sensen C."/>
            <person name="Skala J."/>
            <person name="Soares H."/>
            <person name="Sor F."/>
            <person name="Stegemann J."/>
            <person name="Tettelin H."/>
            <person name="Thierry A."/>
            <person name="Tzermia M."/>
            <person name="Urrestarazu L.A."/>
            <person name="van Dyck L."/>
            <person name="van Vliet-Reedijk J.C."/>
            <person name="Valens M."/>
            <person name="Vandenbol M."/>
            <person name="Vilela C."/>
            <person name="Vissers S."/>
            <person name="von Wettstein D."/>
            <person name="Voss H."/>
            <person name="Wiemann S."/>
            <person name="Xu G."/>
            <person name="Zimmermann J."/>
            <person name="Haasemann M."/>
            <person name="Becker I."/>
            <person name="Mewes H.-W."/>
        </authorList>
    </citation>
    <scope>NUCLEOTIDE SEQUENCE [LARGE SCALE GENOMIC DNA]</scope>
    <source>
        <strain>ATCC 204508 / S288c</strain>
    </source>
</reference>
<reference key="3">
    <citation type="journal article" date="2014" name="G3 (Bethesda)">
        <title>The reference genome sequence of Saccharomyces cerevisiae: Then and now.</title>
        <authorList>
            <person name="Engel S.R."/>
            <person name="Dietrich F.S."/>
            <person name="Fisk D.G."/>
            <person name="Binkley G."/>
            <person name="Balakrishnan R."/>
            <person name="Costanzo M.C."/>
            <person name="Dwight S.S."/>
            <person name="Hitz B.C."/>
            <person name="Karra K."/>
            <person name="Nash R.S."/>
            <person name="Weng S."/>
            <person name="Wong E.D."/>
            <person name="Lloyd P."/>
            <person name="Skrzypek M.S."/>
            <person name="Miyasato S.R."/>
            <person name="Simison M."/>
            <person name="Cherry J.M."/>
        </authorList>
    </citation>
    <scope>GENOME REANNOTATION</scope>
    <source>
        <strain>ATCC 204508 / S288c</strain>
    </source>
</reference>
<reference key="4">
    <citation type="journal article" date="2003" name="Nature">
        <title>Global analysis of protein localization in budding yeast.</title>
        <authorList>
            <person name="Huh W.-K."/>
            <person name="Falvo J.V."/>
            <person name="Gerke L.C."/>
            <person name="Carroll A.S."/>
            <person name="Howson R.W."/>
            <person name="Weissman J.S."/>
            <person name="O'Shea E.K."/>
        </authorList>
    </citation>
    <scope>SUBCELLULAR LOCATION [LARGE SCALE ANALYSIS]</scope>
</reference>
<reference key="5">
    <citation type="journal article" date="2003" name="Nature">
        <title>Global analysis of protein expression in yeast.</title>
        <authorList>
            <person name="Ghaemmaghami S."/>
            <person name="Huh W.-K."/>
            <person name="Bower K."/>
            <person name="Howson R.W."/>
            <person name="Belle A."/>
            <person name="Dephoure N."/>
            <person name="O'Shea E.K."/>
            <person name="Weissman J.S."/>
        </authorList>
    </citation>
    <scope>LEVEL OF PROTEIN EXPRESSION [LARGE SCALE ANALYSIS]</scope>
</reference>
<reference key="6">
    <citation type="journal article" date="2008" name="Genome Biol.">
        <title>Chromatin Central: towards the comparative proteome by accurate mapping of the yeast proteomic environment.</title>
        <authorList>
            <person name="Shevchenko A."/>
            <person name="Roguev A."/>
            <person name="Schaft D."/>
            <person name="Buchanan L."/>
            <person name="Habermann B."/>
            <person name="Sakalar C."/>
            <person name="Thomas H."/>
            <person name="Krogan N.J."/>
            <person name="Shevchenko A."/>
            <person name="Stewart A.F."/>
        </authorList>
    </citation>
    <scope>IDENTIFICATION IN THE ASTRA COMPLEX</scope>
    <scope>IDENTIFICATION BY MASS SPECTROMETRY</scope>
</reference>
<reference key="7">
    <citation type="journal article" date="2008" name="Mol. Cell. Proteomics">
        <title>A multidimensional chromatography technology for in-depth phosphoproteome analysis.</title>
        <authorList>
            <person name="Albuquerque C.P."/>
            <person name="Smolka M.B."/>
            <person name="Payne S.H."/>
            <person name="Bafna V."/>
            <person name="Eng J."/>
            <person name="Zhou H."/>
        </authorList>
    </citation>
    <scope>PHOSPHORYLATION [LARGE SCALE ANALYSIS] AT SER-817</scope>
    <scope>IDENTIFICATION BY MASS SPECTROMETRY [LARGE SCALE ANALYSIS]</scope>
</reference>
<reference key="8">
    <citation type="journal article" date="2009" name="Science">
        <title>Global analysis of Cdk1 substrate phosphorylation sites provides insights into evolution.</title>
        <authorList>
            <person name="Holt L.J."/>
            <person name="Tuch B.B."/>
            <person name="Villen J."/>
            <person name="Johnson A.D."/>
            <person name="Gygi S.P."/>
            <person name="Morgan D.O."/>
        </authorList>
    </citation>
    <scope>PHOSPHORYLATION [LARGE SCALE ANALYSIS] AT SER-817</scope>
    <scope>IDENTIFICATION BY MASS SPECTROMETRY [LARGE SCALE ANALYSIS]</scope>
</reference>
<reference key="9">
    <citation type="journal article" date="2010" name="Genes Dev.">
        <title>Tel2 structure and function in the Hsp90-dependent maturation of mTOR and ATR complexes.</title>
        <authorList>
            <person name="Takai H."/>
            <person name="Xie Y."/>
            <person name="de Lange T."/>
            <person name="Pavletich N.P."/>
        </authorList>
    </citation>
    <scope>INTERACTION WITH TEL2 AND TTI2</scope>
</reference>
<keyword id="KW-0156">Chromatin regulator</keyword>
<keyword id="KW-0963">Cytoplasm</keyword>
<keyword id="KW-0539">Nucleus</keyword>
<keyword id="KW-0597">Phosphoprotein</keyword>
<keyword id="KW-1185">Reference proteome</keyword>
<name>TTI1_YEAST</name>
<accession>P36097</accession>
<accession>D6VXQ3</accession>
<feature type="chain" id="PRO_0000203185" description="TEL2-interacting protein 1">
    <location>
        <begin position="1"/>
        <end position="1038"/>
    </location>
</feature>
<feature type="region of interest" description="Disordered" evidence="1">
    <location>
        <begin position="810"/>
        <end position="840"/>
    </location>
</feature>
<feature type="compositionally biased region" description="Acidic residues" evidence="1">
    <location>
        <begin position="816"/>
        <end position="829"/>
    </location>
</feature>
<feature type="modified residue" description="Phosphoserine" evidence="8 9">
    <location>
        <position position="817"/>
    </location>
</feature>
<comment type="function">
    <text>Component of the ASTRA complex involved in chromatin remodeling.</text>
</comment>
<comment type="subunit">
    <text evidence="4 5">Component of the ASTRA chromatin remodeling machinery complex composed of at least RVB1, RVB2, TRA1, TEL2, TT1 and TTI2. Component of the TTT complex composed of TEL2, TTI1 and TTI2. Interacts with TEL2 and TTI2.</text>
</comment>
<comment type="interaction">
    <interactant intactId="EBI-26630">
        <id>P36097</id>
    </interactant>
    <interactant intactId="EBI-25698">
        <id>P47168</id>
        <label>TTI2</label>
    </interactant>
    <organismsDiffer>false</organismsDiffer>
    <experiments>4</experiments>
</comment>
<comment type="subcellular location">
    <subcellularLocation>
        <location evidence="2">Cytoplasm</location>
    </subcellularLocation>
    <subcellularLocation>
        <location evidence="7">Nucleus</location>
    </subcellularLocation>
</comment>
<comment type="miscellaneous">
    <text evidence="3">Present with 721 molecules/cell in log phase SD medium.</text>
</comment>
<comment type="similarity">
    <text evidence="6">Belongs to the tti1 family.</text>
</comment>
<evidence type="ECO:0000256" key="1">
    <source>
        <dbReference type="SAM" id="MobiDB-lite"/>
    </source>
</evidence>
<evidence type="ECO:0000269" key="2">
    <source>
    </source>
</evidence>
<evidence type="ECO:0000269" key="3">
    <source>
    </source>
</evidence>
<evidence type="ECO:0000269" key="4">
    <source>
    </source>
</evidence>
<evidence type="ECO:0000269" key="5">
    <source>
    </source>
</evidence>
<evidence type="ECO:0000305" key="6"/>
<evidence type="ECO:0000305" key="7">
    <source>
    </source>
</evidence>
<evidence type="ECO:0007744" key="8">
    <source>
    </source>
</evidence>
<evidence type="ECO:0007744" key="9">
    <source>
    </source>
</evidence>
<organism>
    <name type="scientific">Saccharomyces cerevisiae (strain ATCC 204508 / S288c)</name>
    <name type="common">Baker's yeast</name>
    <dbReference type="NCBI Taxonomy" id="559292"/>
    <lineage>
        <taxon>Eukaryota</taxon>
        <taxon>Fungi</taxon>
        <taxon>Dikarya</taxon>
        <taxon>Ascomycota</taxon>
        <taxon>Saccharomycotina</taxon>
        <taxon>Saccharomycetes</taxon>
        <taxon>Saccharomycetales</taxon>
        <taxon>Saccharomycetaceae</taxon>
        <taxon>Saccharomyces</taxon>
    </lineage>
</organism>
<dbReference type="EMBL" id="X71622">
    <property type="status" value="NOT_ANNOTATED_CDS"/>
    <property type="molecule type" value="Genomic_DNA"/>
</dbReference>
<dbReference type="EMBL" id="Z28033">
    <property type="protein sequence ID" value="CAA81868.1"/>
    <property type="molecule type" value="Genomic_DNA"/>
</dbReference>
<dbReference type="EMBL" id="BK006944">
    <property type="protein sequence ID" value="DAA09123.1"/>
    <property type="molecule type" value="Genomic_DNA"/>
</dbReference>
<dbReference type="PIR" id="S37854">
    <property type="entry name" value="S37854"/>
</dbReference>
<dbReference type="RefSeq" id="NP_012892.1">
    <property type="nucleotide sequence ID" value="NM_001179599.1"/>
</dbReference>
<dbReference type="BioGRID" id="34099">
    <property type="interactions" value="624"/>
</dbReference>
<dbReference type="ComplexPortal" id="CPX-1422">
    <property type="entry name" value="TEL2-TTI1-TTI2 complex"/>
</dbReference>
<dbReference type="DIP" id="DIP-1914N"/>
<dbReference type="FunCoup" id="P36097">
    <property type="interactions" value="686"/>
</dbReference>
<dbReference type="IntAct" id="P36097">
    <property type="interactions" value="5"/>
</dbReference>
<dbReference type="MINT" id="P36097"/>
<dbReference type="STRING" id="4932.YKL033W"/>
<dbReference type="iPTMnet" id="P36097"/>
<dbReference type="PaxDb" id="4932-YKL033W"/>
<dbReference type="PeptideAtlas" id="P36097"/>
<dbReference type="EnsemblFungi" id="YKL033W_mRNA">
    <property type="protein sequence ID" value="YKL033W"/>
    <property type="gene ID" value="YKL033W"/>
</dbReference>
<dbReference type="GeneID" id="853834"/>
<dbReference type="KEGG" id="sce:YKL033W"/>
<dbReference type="AGR" id="SGD:S000001516"/>
<dbReference type="SGD" id="S000001516">
    <property type="gene designation" value="TTI1"/>
</dbReference>
<dbReference type="VEuPathDB" id="FungiDB:YKL033W"/>
<dbReference type="eggNOG" id="KOG4524">
    <property type="taxonomic scope" value="Eukaryota"/>
</dbReference>
<dbReference type="GeneTree" id="ENSGT00390000009748"/>
<dbReference type="HOGENOM" id="CLU_005544_0_0_1"/>
<dbReference type="InParanoid" id="P36097"/>
<dbReference type="OMA" id="PHPKKPW"/>
<dbReference type="OrthoDB" id="6781668at2759"/>
<dbReference type="BioCyc" id="YEAST:G3O-31836-MONOMER"/>
<dbReference type="BioGRID-ORCS" id="853834">
    <property type="hits" value="1 hit in 10 CRISPR screens"/>
</dbReference>
<dbReference type="PRO" id="PR:P36097"/>
<dbReference type="Proteomes" id="UP000002311">
    <property type="component" value="Chromosome XI"/>
</dbReference>
<dbReference type="RNAct" id="P36097">
    <property type="molecule type" value="protein"/>
</dbReference>
<dbReference type="GO" id="GO:0005737">
    <property type="term" value="C:cytoplasm"/>
    <property type="evidence" value="ECO:0007005"/>
    <property type="project" value="SGD"/>
</dbReference>
<dbReference type="GO" id="GO:0005739">
    <property type="term" value="C:mitochondrion"/>
    <property type="evidence" value="ECO:0007005"/>
    <property type="project" value="SGD"/>
</dbReference>
<dbReference type="GO" id="GO:0005634">
    <property type="term" value="C:nucleus"/>
    <property type="evidence" value="ECO:0000303"/>
    <property type="project" value="ComplexPortal"/>
</dbReference>
<dbReference type="GO" id="GO:0110078">
    <property type="term" value="C:TTT Hsp90 cochaperone complex"/>
    <property type="evidence" value="ECO:0000353"/>
    <property type="project" value="ComplexPortal"/>
</dbReference>
<dbReference type="GO" id="GO:0006325">
    <property type="term" value="P:chromatin organization"/>
    <property type="evidence" value="ECO:0007669"/>
    <property type="project" value="UniProtKB-KW"/>
</dbReference>
<dbReference type="GO" id="GO:2000003">
    <property type="term" value="P:positive regulation of DNA damage checkpoint"/>
    <property type="evidence" value="ECO:0000303"/>
    <property type="project" value="ComplexPortal"/>
</dbReference>
<dbReference type="GO" id="GO:0050821">
    <property type="term" value="P:protein stabilization"/>
    <property type="evidence" value="ECO:0000303"/>
    <property type="project" value="ComplexPortal"/>
</dbReference>
<dbReference type="InterPro" id="IPR016024">
    <property type="entry name" value="ARM-type_fold"/>
</dbReference>
<dbReference type="InterPro" id="IPR052587">
    <property type="entry name" value="TELO2-interacting_protein_1"/>
</dbReference>
<dbReference type="InterPro" id="IPR016441">
    <property type="entry name" value="Tti1"/>
</dbReference>
<dbReference type="InterPro" id="IPR049362">
    <property type="entry name" value="TTI1_rpt"/>
</dbReference>
<dbReference type="PANTHER" id="PTHR18460">
    <property type="entry name" value="TEL2 INTERACTING PROTEIN 1 TTI1 FAMILY MEMBER"/>
    <property type="match status" value="1"/>
</dbReference>
<dbReference type="PANTHER" id="PTHR18460:SF3">
    <property type="entry name" value="TELO2-INTERACTING PROTEIN 1 HOMOLOG"/>
    <property type="match status" value="1"/>
</dbReference>
<dbReference type="Pfam" id="PF24181">
    <property type="entry name" value="TPR_TTI1_C"/>
    <property type="match status" value="1"/>
</dbReference>
<dbReference type="Pfam" id="PF24173">
    <property type="entry name" value="TPR_TTI1_N"/>
    <property type="match status" value="1"/>
</dbReference>
<dbReference type="Pfam" id="PF21547">
    <property type="entry name" value="TTI1"/>
    <property type="match status" value="1"/>
</dbReference>
<dbReference type="PIRSF" id="PIRSF005250">
    <property type="entry name" value="UCP005250"/>
    <property type="match status" value="1"/>
</dbReference>
<dbReference type="SUPFAM" id="SSF48371">
    <property type="entry name" value="ARM repeat"/>
    <property type="match status" value="1"/>
</dbReference>
<proteinExistence type="evidence at protein level"/>